<reference key="1">
    <citation type="submission" date="2006-12" db="EMBL/GenBank/DDBJ databases">
        <authorList>
            <person name="Fouts D.E."/>
            <person name="Nelson K.E."/>
            <person name="Sebastian Y."/>
        </authorList>
    </citation>
    <scope>NUCLEOTIDE SEQUENCE [LARGE SCALE GENOMIC DNA]</scope>
    <source>
        <strain>81-176</strain>
    </source>
</reference>
<sequence length="387" mass="41742">MNIHEYQAKAIFADNSIPTLKGKVAFSVDEAVANAKELGGSVWAVKAQIHAGGRGLGGGVKIAKNLDEVKDYASKILGMNLVTHQTGPEGKLVQKLYIESGANIVKEYYLAILFNRMAEQITIIASSEGGMDIEKVAKESPEKIAKVGIDPQIGFKMFHGLEVAKVLGLDKDESKKLISMIAKLYKLYMDKDMNMLEINPLIKTAEGDFYALDAKCSFDDSALYRHPEIAELRDITEENPAEREAAEFGLSYVKLDGDVACMVNGAGLAMATMDIINYSGAKPANFLDVGGGASAETVAKAFEIILRDKNVKVIFINIFGGIVRCDRIANGILEATKNVEVNIPIVVRLDGTNAAEAKTILDNSNLKNIKAATNLKNGAELVKSLVG</sequence>
<dbReference type="EC" id="6.2.1.5" evidence="1"/>
<dbReference type="EMBL" id="CP000538">
    <property type="protein sequence ID" value="EAQ73087.1"/>
    <property type="molecule type" value="Genomic_DNA"/>
</dbReference>
<dbReference type="RefSeq" id="WP_002869310.1">
    <property type="nucleotide sequence ID" value="NC_008787.1"/>
</dbReference>
<dbReference type="SMR" id="A1VYP2"/>
<dbReference type="KEGG" id="cjj:CJJ81176_0558"/>
<dbReference type="eggNOG" id="COG0045">
    <property type="taxonomic scope" value="Bacteria"/>
</dbReference>
<dbReference type="HOGENOM" id="CLU_037430_0_2_7"/>
<dbReference type="UniPathway" id="UPA00223">
    <property type="reaction ID" value="UER00999"/>
</dbReference>
<dbReference type="Proteomes" id="UP000000646">
    <property type="component" value="Chromosome"/>
</dbReference>
<dbReference type="GO" id="GO:0005829">
    <property type="term" value="C:cytosol"/>
    <property type="evidence" value="ECO:0007669"/>
    <property type="project" value="TreeGrafter"/>
</dbReference>
<dbReference type="GO" id="GO:0042709">
    <property type="term" value="C:succinate-CoA ligase complex"/>
    <property type="evidence" value="ECO:0007669"/>
    <property type="project" value="TreeGrafter"/>
</dbReference>
<dbReference type="GO" id="GO:0005524">
    <property type="term" value="F:ATP binding"/>
    <property type="evidence" value="ECO:0007669"/>
    <property type="project" value="UniProtKB-UniRule"/>
</dbReference>
<dbReference type="GO" id="GO:0000287">
    <property type="term" value="F:magnesium ion binding"/>
    <property type="evidence" value="ECO:0007669"/>
    <property type="project" value="UniProtKB-UniRule"/>
</dbReference>
<dbReference type="GO" id="GO:0004775">
    <property type="term" value="F:succinate-CoA ligase (ADP-forming) activity"/>
    <property type="evidence" value="ECO:0007669"/>
    <property type="project" value="UniProtKB-UniRule"/>
</dbReference>
<dbReference type="GO" id="GO:0004776">
    <property type="term" value="F:succinate-CoA ligase (GDP-forming) activity"/>
    <property type="evidence" value="ECO:0007669"/>
    <property type="project" value="RHEA"/>
</dbReference>
<dbReference type="GO" id="GO:0006104">
    <property type="term" value="P:succinyl-CoA metabolic process"/>
    <property type="evidence" value="ECO:0007669"/>
    <property type="project" value="TreeGrafter"/>
</dbReference>
<dbReference type="GO" id="GO:0006099">
    <property type="term" value="P:tricarboxylic acid cycle"/>
    <property type="evidence" value="ECO:0007669"/>
    <property type="project" value="UniProtKB-UniRule"/>
</dbReference>
<dbReference type="FunFam" id="3.30.1490.20:FF:000002">
    <property type="entry name" value="Succinate--CoA ligase [ADP-forming] subunit beta"/>
    <property type="match status" value="1"/>
</dbReference>
<dbReference type="FunFam" id="3.30.470.20:FF:000002">
    <property type="entry name" value="Succinate--CoA ligase [ADP-forming] subunit beta"/>
    <property type="match status" value="1"/>
</dbReference>
<dbReference type="FunFam" id="3.40.50.261:FF:000001">
    <property type="entry name" value="Succinate--CoA ligase [ADP-forming] subunit beta"/>
    <property type="match status" value="1"/>
</dbReference>
<dbReference type="Gene3D" id="3.30.1490.20">
    <property type="entry name" value="ATP-grasp fold, A domain"/>
    <property type="match status" value="1"/>
</dbReference>
<dbReference type="Gene3D" id="3.30.470.20">
    <property type="entry name" value="ATP-grasp fold, B domain"/>
    <property type="match status" value="1"/>
</dbReference>
<dbReference type="Gene3D" id="3.40.50.261">
    <property type="entry name" value="Succinyl-CoA synthetase domains"/>
    <property type="match status" value="1"/>
</dbReference>
<dbReference type="HAMAP" id="MF_00558">
    <property type="entry name" value="Succ_CoA_beta"/>
    <property type="match status" value="1"/>
</dbReference>
<dbReference type="InterPro" id="IPR013650">
    <property type="entry name" value="ATP-grasp_succ-CoA_synth-type"/>
</dbReference>
<dbReference type="InterPro" id="IPR013815">
    <property type="entry name" value="ATP_grasp_subdomain_1"/>
</dbReference>
<dbReference type="InterPro" id="IPR017866">
    <property type="entry name" value="Succ-CoA_synthase_bsu_CS"/>
</dbReference>
<dbReference type="InterPro" id="IPR005811">
    <property type="entry name" value="SUCC_ACL_C"/>
</dbReference>
<dbReference type="InterPro" id="IPR005809">
    <property type="entry name" value="Succ_CoA_ligase-like_bsu"/>
</dbReference>
<dbReference type="InterPro" id="IPR016102">
    <property type="entry name" value="Succinyl-CoA_synth-like"/>
</dbReference>
<dbReference type="NCBIfam" id="NF001913">
    <property type="entry name" value="PRK00696.1"/>
    <property type="match status" value="1"/>
</dbReference>
<dbReference type="NCBIfam" id="TIGR01016">
    <property type="entry name" value="sucCoAbeta"/>
    <property type="match status" value="1"/>
</dbReference>
<dbReference type="PANTHER" id="PTHR11815:SF10">
    <property type="entry name" value="SUCCINATE--COA LIGASE [GDP-FORMING] SUBUNIT BETA, MITOCHONDRIAL"/>
    <property type="match status" value="1"/>
</dbReference>
<dbReference type="PANTHER" id="PTHR11815">
    <property type="entry name" value="SUCCINYL-COA SYNTHETASE BETA CHAIN"/>
    <property type="match status" value="1"/>
</dbReference>
<dbReference type="Pfam" id="PF08442">
    <property type="entry name" value="ATP-grasp_2"/>
    <property type="match status" value="1"/>
</dbReference>
<dbReference type="Pfam" id="PF00549">
    <property type="entry name" value="Ligase_CoA"/>
    <property type="match status" value="1"/>
</dbReference>
<dbReference type="PIRSF" id="PIRSF001554">
    <property type="entry name" value="SucCS_beta"/>
    <property type="match status" value="1"/>
</dbReference>
<dbReference type="SUPFAM" id="SSF56059">
    <property type="entry name" value="Glutathione synthetase ATP-binding domain-like"/>
    <property type="match status" value="1"/>
</dbReference>
<dbReference type="SUPFAM" id="SSF52210">
    <property type="entry name" value="Succinyl-CoA synthetase domains"/>
    <property type="match status" value="1"/>
</dbReference>
<dbReference type="PROSITE" id="PS01217">
    <property type="entry name" value="SUCCINYL_COA_LIG_3"/>
    <property type="match status" value="1"/>
</dbReference>
<accession>A1VYP2</accession>
<evidence type="ECO:0000255" key="1">
    <source>
        <dbReference type="HAMAP-Rule" id="MF_00558"/>
    </source>
</evidence>
<keyword id="KW-0067">ATP-binding</keyword>
<keyword id="KW-0436">Ligase</keyword>
<keyword id="KW-0460">Magnesium</keyword>
<keyword id="KW-0479">Metal-binding</keyword>
<keyword id="KW-0547">Nucleotide-binding</keyword>
<keyword id="KW-0816">Tricarboxylic acid cycle</keyword>
<gene>
    <name evidence="1" type="primary">sucC</name>
    <name type="ordered locus">CJJ81176_0558</name>
</gene>
<feature type="chain" id="PRO_1000082055" description="Succinate--CoA ligase [ADP-forming] subunit beta">
    <location>
        <begin position="1"/>
        <end position="387"/>
    </location>
</feature>
<feature type="binding site" evidence="1">
    <location>
        <position position="46"/>
    </location>
    <ligand>
        <name>ATP</name>
        <dbReference type="ChEBI" id="CHEBI:30616"/>
    </ligand>
</feature>
<feature type="binding site" evidence="1">
    <location>
        <begin position="53"/>
        <end position="55"/>
    </location>
    <ligand>
        <name>ATP</name>
        <dbReference type="ChEBI" id="CHEBI:30616"/>
    </ligand>
</feature>
<feature type="binding site" evidence="1">
    <location>
        <position position="99"/>
    </location>
    <ligand>
        <name>ATP</name>
        <dbReference type="ChEBI" id="CHEBI:30616"/>
    </ligand>
</feature>
<feature type="binding site" evidence="1">
    <location>
        <position position="102"/>
    </location>
    <ligand>
        <name>ATP</name>
        <dbReference type="ChEBI" id="CHEBI:30616"/>
    </ligand>
</feature>
<feature type="binding site" evidence="1">
    <location>
        <position position="107"/>
    </location>
    <ligand>
        <name>ATP</name>
        <dbReference type="ChEBI" id="CHEBI:30616"/>
    </ligand>
</feature>
<feature type="binding site" evidence="1">
    <location>
        <position position="199"/>
    </location>
    <ligand>
        <name>Mg(2+)</name>
        <dbReference type="ChEBI" id="CHEBI:18420"/>
    </ligand>
</feature>
<feature type="binding site" evidence="1">
    <location>
        <position position="213"/>
    </location>
    <ligand>
        <name>Mg(2+)</name>
        <dbReference type="ChEBI" id="CHEBI:18420"/>
    </ligand>
</feature>
<feature type="binding site" evidence="1">
    <location>
        <position position="264"/>
    </location>
    <ligand>
        <name>substrate</name>
        <note>ligand shared with subunit alpha</note>
    </ligand>
</feature>
<feature type="binding site" evidence="1">
    <location>
        <begin position="321"/>
        <end position="323"/>
    </location>
    <ligand>
        <name>substrate</name>
        <note>ligand shared with subunit alpha</note>
    </ligand>
</feature>
<organism>
    <name type="scientific">Campylobacter jejuni subsp. jejuni serotype O:23/36 (strain 81-176)</name>
    <dbReference type="NCBI Taxonomy" id="354242"/>
    <lineage>
        <taxon>Bacteria</taxon>
        <taxon>Pseudomonadati</taxon>
        <taxon>Campylobacterota</taxon>
        <taxon>Epsilonproteobacteria</taxon>
        <taxon>Campylobacterales</taxon>
        <taxon>Campylobacteraceae</taxon>
        <taxon>Campylobacter</taxon>
    </lineage>
</organism>
<comment type="function">
    <text evidence="1">Succinyl-CoA synthetase functions in the citric acid cycle (TCA), coupling the hydrolysis of succinyl-CoA to the synthesis of either ATP or GTP and thus represents the only step of substrate-level phosphorylation in the TCA. The beta subunit provides nucleotide specificity of the enzyme and binds the substrate succinate, while the binding sites for coenzyme A and phosphate are found in the alpha subunit.</text>
</comment>
<comment type="catalytic activity">
    <reaction evidence="1">
        <text>succinate + ATP + CoA = succinyl-CoA + ADP + phosphate</text>
        <dbReference type="Rhea" id="RHEA:17661"/>
        <dbReference type="ChEBI" id="CHEBI:30031"/>
        <dbReference type="ChEBI" id="CHEBI:30616"/>
        <dbReference type="ChEBI" id="CHEBI:43474"/>
        <dbReference type="ChEBI" id="CHEBI:57287"/>
        <dbReference type="ChEBI" id="CHEBI:57292"/>
        <dbReference type="ChEBI" id="CHEBI:456216"/>
        <dbReference type="EC" id="6.2.1.5"/>
    </reaction>
    <physiologicalReaction direction="right-to-left" evidence="1">
        <dbReference type="Rhea" id="RHEA:17663"/>
    </physiologicalReaction>
</comment>
<comment type="catalytic activity">
    <reaction evidence="1">
        <text>GTP + succinate + CoA = succinyl-CoA + GDP + phosphate</text>
        <dbReference type="Rhea" id="RHEA:22120"/>
        <dbReference type="ChEBI" id="CHEBI:30031"/>
        <dbReference type="ChEBI" id="CHEBI:37565"/>
        <dbReference type="ChEBI" id="CHEBI:43474"/>
        <dbReference type="ChEBI" id="CHEBI:57287"/>
        <dbReference type="ChEBI" id="CHEBI:57292"/>
        <dbReference type="ChEBI" id="CHEBI:58189"/>
    </reaction>
    <physiologicalReaction direction="right-to-left" evidence="1">
        <dbReference type="Rhea" id="RHEA:22122"/>
    </physiologicalReaction>
</comment>
<comment type="cofactor">
    <cofactor evidence="1">
        <name>Mg(2+)</name>
        <dbReference type="ChEBI" id="CHEBI:18420"/>
    </cofactor>
    <text evidence="1">Binds 1 Mg(2+) ion per subunit.</text>
</comment>
<comment type="pathway">
    <text evidence="1">Carbohydrate metabolism; tricarboxylic acid cycle; succinate from succinyl-CoA (ligase route): step 1/1.</text>
</comment>
<comment type="subunit">
    <text evidence="1">Heterotetramer of two alpha and two beta subunits.</text>
</comment>
<comment type="similarity">
    <text evidence="1">Belongs to the succinate/malate CoA ligase beta subunit family.</text>
</comment>
<proteinExistence type="inferred from homology"/>
<name>SUCC_CAMJJ</name>
<protein>
    <recommendedName>
        <fullName evidence="1">Succinate--CoA ligase [ADP-forming] subunit beta</fullName>
        <ecNumber evidence="1">6.2.1.5</ecNumber>
    </recommendedName>
    <alternativeName>
        <fullName evidence="1">Succinyl-CoA synthetase subunit beta</fullName>
        <shortName evidence="1">SCS-beta</shortName>
    </alternativeName>
</protein>